<name>MRGX2_PANTR</name>
<comment type="function">
    <text evidence="1">Mast cell-specific receptor for basic secretagogues, i.e. cationic amphiphilic drugs, as well as endo- or exogenous peptides, consisting of a basic head group and a hydrophobic core. Recognizes and binds small molecules containing a cyclized tetrahydroisoquinoline (THIQ), such as non-steroidal neuromuscular blocking drugs (NMBDs), including tubocurarine and atracurium. In response to these compounds, mediates pseudo-allergic reactions characterized by histamine release, inflammation and airway contraction.</text>
</comment>
<comment type="subcellular location">
    <subcellularLocation>
        <location evidence="2">Cell membrane</location>
        <topology evidence="2">Multi-pass membrane protein</topology>
    </subcellularLocation>
</comment>
<comment type="similarity">
    <text evidence="3">Belongs to the G-protein coupled receptor 1 family. Mas subfamily.</text>
</comment>
<evidence type="ECO:0000250" key="1">
    <source>
        <dbReference type="UniProtKB" id="Q3KNA1"/>
    </source>
</evidence>
<evidence type="ECO:0000255" key="2"/>
<evidence type="ECO:0000255" key="3">
    <source>
        <dbReference type="PROSITE-ProRule" id="PRU00521"/>
    </source>
</evidence>
<feature type="chain" id="PRO_0000069778" description="Mas-related G-protein coupled receptor member X2">
    <location>
        <begin position="1"/>
        <end position="329"/>
    </location>
</feature>
<feature type="topological domain" description="Extracellular" evidence="2">
    <location>
        <begin position="1"/>
        <end position="33"/>
    </location>
</feature>
<feature type="transmembrane region" description="Helical; Name=1" evidence="2">
    <location>
        <begin position="34"/>
        <end position="54"/>
    </location>
</feature>
<feature type="topological domain" description="Cytoplasmic" evidence="2">
    <location>
        <begin position="55"/>
        <end position="63"/>
    </location>
</feature>
<feature type="transmembrane region" description="Helical; Name=2" evidence="2">
    <location>
        <begin position="64"/>
        <end position="84"/>
    </location>
</feature>
<feature type="topological domain" description="Extracellular" evidence="2">
    <location>
        <begin position="85"/>
        <end position="96"/>
    </location>
</feature>
<feature type="transmembrane region" description="Helical; Name=3" evidence="2">
    <location>
        <begin position="97"/>
        <end position="117"/>
    </location>
</feature>
<feature type="topological domain" description="Cytoplasmic" evidence="2">
    <location>
        <begin position="118"/>
        <end position="144"/>
    </location>
</feature>
<feature type="transmembrane region" description="Helical; Name=4" evidence="2">
    <location>
        <begin position="145"/>
        <end position="165"/>
    </location>
</feature>
<feature type="topological domain" description="Extracellular" evidence="2">
    <location>
        <begin position="166"/>
        <end position="183"/>
    </location>
</feature>
<feature type="transmembrane region" description="Helical; Name=5" evidence="2">
    <location>
        <begin position="184"/>
        <end position="204"/>
    </location>
</feature>
<feature type="topological domain" description="Cytoplasmic" evidence="2">
    <location>
        <begin position="205"/>
        <end position="227"/>
    </location>
</feature>
<feature type="transmembrane region" description="Helical; Name=6" evidence="2">
    <location>
        <begin position="228"/>
        <end position="248"/>
    </location>
</feature>
<feature type="topological domain" description="Extracellular" evidence="2">
    <location>
        <begin position="249"/>
        <end position="263"/>
    </location>
</feature>
<feature type="transmembrane region" description="Helical; Name=7" evidence="2">
    <location>
        <begin position="264"/>
        <end position="284"/>
    </location>
</feature>
<feature type="topological domain" description="Cytoplasmic" evidence="2">
    <location>
        <begin position="285"/>
        <end position="329"/>
    </location>
</feature>
<feature type="sequence conflict" description="In Ref. 1; AAW70042." ref="1">
    <original>K</original>
    <variation>R</variation>
    <location>
        <position position="61"/>
    </location>
</feature>
<reference key="1">
    <citation type="journal article" date="2005" name="Gene">
        <title>Adaptive evolution of MRGX2, a human sensory neuron specific gene involved in nociception.</title>
        <authorList>
            <person name="Yang S."/>
            <person name="Liu Y."/>
            <person name="Lin A.A."/>
            <person name="Cavalli-Sforza L.L."/>
            <person name="Zhao Z."/>
            <person name="Su B."/>
        </authorList>
    </citation>
    <scope>NUCLEOTIDE SEQUENCE [GENOMIC DNA]</scope>
</reference>
<reference key="2">
    <citation type="journal article" date="2014" name="Gene">
        <title>Comparative genomic analysis of eutherian Mas-related G protein-coupled receptor genes.</title>
        <authorList>
            <person name="Premzl M."/>
        </authorList>
    </citation>
    <scope>NUCLEOTIDE SEQUENCE [GENOMIC DNA]</scope>
</reference>
<reference key="3">
    <citation type="journal article" date="2005" name="Nature">
        <title>Initial sequence of the chimpanzee genome and comparison with the human genome.</title>
        <authorList>
            <consortium name="Chimpanzee sequencing and analysis consortium"/>
        </authorList>
    </citation>
    <scope>NUCLEOTIDE SEQUENCE [LARGE SCALE GENOMIC DNA]</scope>
</reference>
<dbReference type="EMBL" id="AY651129">
    <property type="protein sequence ID" value="AAW70042.1"/>
    <property type="molecule type" value="Genomic_DNA"/>
</dbReference>
<dbReference type="EMBL" id="HG426074">
    <property type="protein sequence ID" value="CDG86192.1"/>
    <property type="molecule type" value="Genomic_DNA"/>
</dbReference>
<dbReference type="EMBL" id="AACZ03078854">
    <property type="status" value="NOT_ANNOTATED_CDS"/>
    <property type="molecule type" value="Genomic_DNA"/>
</dbReference>
<dbReference type="SMR" id="Q4QXX9"/>
<dbReference type="FunCoup" id="Q4QXX9">
    <property type="interactions" value="259"/>
</dbReference>
<dbReference type="STRING" id="9598.ENSPTRP00000005975"/>
<dbReference type="PaxDb" id="9598-ENSPTRP00000005975"/>
<dbReference type="eggNOG" id="ENOG502RTWA">
    <property type="taxonomic scope" value="Eukaryota"/>
</dbReference>
<dbReference type="HOGENOM" id="CLU_009579_4_1_1"/>
<dbReference type="InParanoid" id="Q4QXX9"/>
<dbReference type="TreeFam" id="TF336336"/>
<dbReference type="Proteomes" id="UP000002277">
    <property type="component" value="Unplaced"/>
</dbReference>
<dbReference type="GO" id="GO:0005886">
    <property type="term" value="C:plasma membrane"/>
    <property type="evidence" value="ECO:0000318"/>
    <property type="project" value="GO_Central"/>
</dbReference>
<dbReference type="GO" id="GO:0004930">
    <property type="term" value="F:G protein-coupled receptor activity"/>
    <property type="evidence" value="ECO:0000250"/>
    <property type="project" value="UniProtKB"/>
</dbReference>
<dbReference type="GO" id="GO:1990595">
    <property type="term" value="F:mast cell secretagogue receptor activity"/>
    <property type="evidence" value="ECO:0000250"/>
    <property type="project" value="UniProtKB"/>
</dbReference>
<dbReference type="GO" id="GO:0007186">
    <property type="term" value="P:G protein-coupled receptor signaling pathway"/>
    <property type="evidence" value="ECO:0000318"/>
    <property type="project" value="GO_Central"/>
</dbReference>
<dbReference type="GO" id="GO:0045576">
    <property type="term" value="P:mast cell activation"/>
    <property type="evidence" value="ECO:0000250"/>
    <property type="project" value="UniProtKB"/>
</dbReference>
<dbReference type="GO" id="GO:0043303">
    <property type="term" value="P:mast cell degranulation"/>
    <property type="evidence" value="ECO:0000250"/>
    <property type="project" value="UniProtKB"/>
</dbReference>
<dbReference type="FunFam" id="1.20.1070.10:FF:000140">
    <property type="entry name" value="Mas-related G-protein coupled receptor member X2"/>
    <property type="match status" value="1"/>
</dbReference>
<dbReference type="Gene3D" id="1.20.1070.10">
    <property type="entry name" value="Rhodopsin 7-helix transmembrane proteins"/>
    <property type="match status" value="1"/>
</dbReference>
<dbReference type="InterPro" id="IPR000276">
    <property type="entry name" value="GPCR_Rhodpsn"/>
</dbReference>
<dbReference type="InterPro" id="IPR017452">
    <property type="entry name" value="GPCR_Rhodpsn_7TM"/>
</dbReference>
<dbReference type="InterPro" id="IPR026234">
    <property type="entry name" value="MRGPCRFAMILY"/>
</dbReference>
<dbReference type="PANTHER" id="PTHR11334">
    <property type="entry name" value="MAS-RELATED G-PROTEIN COUPLED RECEPTOR"/>
    <property type="match status" value="1"/>
</dbReference>
<dbReference type="PANTHER" id="PTHR11334:SF29">
    <property type="entry name" value="MAS-RELATED G-PROTEIN COUPLED RECEPTOR MEMBER X2"/>
    <property type="match status" value="1"/>
</dbReference>
<dbReference type="Pfam" id="PF00001">
    <property type="entry name" value="7tm_1"/>
    <property type="match status" value="1"/>
</dbReference>
<dbReference type="PRINTS" id="PR00237">
    <property type="entry name" value="GPCRRHODOPSN"/>
</dbReference>
<dbReference type="PRINTS" id="PR02108">
    <property type="entry name" value="MRGPCRFAMILY"/>
</dbReference>
<dbReference type="SUPFAM" id="SSF81321">
    <property type="entry name" value="Family A G protein-coupled receptor-like"/>
    <property type="match status" value="1"/>
</dbReference>
<dbReference type="PROSITE" id="PS00237">
    <property type="entry name" value="G_PROTEIN_RECEP_F1_1"/>
    <property type="match status" value="1"/>
</dbReference>
<dbReference type="PROSITE" id="PS50262">
    <property type="entry name" value="G_PROTEIN_RECEP_F1_2"/>
    <property type="match status" value="1"/>
</dbReference>
<keyword id="KW-1003">Cell membrane</keyword>
<keyword id="KW-0297">G-protein coupled receptor</keyword>
<keyword id="KW-0472">Membrane</keyword>
<keyword id="KW-0675">Receptor</keyword>
<keyword id="KW-1185">Reference proteome</keyword>
<keyword id="KW-0807">Transducer</keyword>
<keyword id="KW-0812">Transmembrane</keyword>
<keyword id="KW-1133">Transmembrane helix</keyword>
<protein>
    <recommendedName>
        <fullName>Mas-related G-protein coupled receptor member X2</fullName>
    </recommendedName>
</protein>
<sequence length="329" mass="36849">MDPTTPAWGTESTTMNGNDQALPLFCGKETLISVFLILFIALVGLVGNGFVLWLLGFRMRKNAFSVYVLSLAGADFLFLCFQIINCLVYLSNVFCSISINFPSFFITVMTCAYLAGLSMLSTISTERCLSVLWPIWYRCRRPRHLSAVACVLLWALSLLLSILEGKFCGLFGDGDSGWCQTFDLITAAWLIFLFMVLCGSSLALLVRILCGSRGLPLTRLYLTILLTVLVFLLCGLPFGIQWFLILWIWKNSDVLFCHIHPVSVVLSSLNSSANPIIYFFVGSFRKQWRLQQPILKLALQRALQDIAEVDHSEGCFRQGTPEMSRSSLV</sequence>
<gene>
    <name type="primary">MRGPRX2</name>
    <name type="synonym">MRGX2</name>
</gene>
<organism>
    <name type="scientific">Pan troglodytes</name>
    <name type="common">Chimpanzee</name>
    <dbReference type="NCBI Taxonomy" id="9598"/>
    <lineage>
        <taxon>Eukaryota</taxon>
        <taxon>Metazoa</taxon>
        <taxon>Chordata</taxon>
        <taxon>Craniata</taxon>
        <taxon>Vertebrata</taxon>
        <taxon>Euteleostomi</taxon>
        <taxon>Mammalia</taxon>
        <taxon>Eutheria</taxon>
        <taxon>Euarchontoglires</taxon>
        <taxon>Primates</taxon>
        <taxon>Haplorrhini</taxon>
        <taxon>Catarrhini</taxon>
        <taxon>Hominidae</taxon>
        <taxon>Pan</taxon>
    </lineage>
</organism>
<proteinExistence type="inferred from homology"/>
<accession>Q4QXX9</accession>
<accession>H2Q3A3</accession>